<sequence>MGPVMLDVEGYELDAEEREILAHPLVGGLILFTRNYHDPAQLRELVRQIRAASRNHLVVAVDQEGGRVQRFREGFTRLPAAQSFAALLGMEEGGKLAQEAGWLMASEMIAMDIDISFAPVLDVGHISAAIGERSYHADPEKALAIASRFIDGMHEAGMKTTGKHFPGHGAVTADSHKETPCDPRPQAEIRAKDMSVFSSLIRENKLDAIMPAHVIYSDVDPRPASGSPYWLKTVLRQELGFDGVIFSDDLSMEGAAIMGSYAERGQASLDAGCDMILVCNNRKGAVSVLDNLSPIKAERVTRLYHKGSFSRQELMDSARWKAISARLNQLHERWQEEKAGH</sequence>
<feature type="chain" id="PRO_1000121060" description="Beta-hexosaminidase">
    <location>
        <begin position="1"/>
        <end position="341"/>
    </location>
</feature>
<feature type="active site" description="Proton donor/acceptor" evidence="1">
    <location>
        <position position="176"/>
    </location>
</feature>
<feature type="active site" description="Nucleophile" evidence="1">
    <location>
        <position position="248"/>
    </location>
</feature>
<feature type="binding site" evidence="1">
    <location>
        <position position="62"/>
    </location>
    <ligand>
        <name>substrate</name>
    </ligand>
</feature>
<feature type="binding site" evidence="1">
    <location>
        <position position="70"/>
    </location>
    <ligand>
        <name>substrate</name>
    </ligand>
</feature>
<feature type="binding site" evidence="1">
    <location>
        <position position="133"/>
    </location>
    <ligand>
        <name>substrate</name>
    </ligand>
</feature>
<feature type="binding site" evidence="1">
    <location>
        <begin position="163"/>
        <end position="164"/>
    </location>
    <ligand>
        <name>substrate</name>
    </ligand>
</feature>
<feature type="site" description="Important for catalytic activity" evidence="1">
    <location>
        <position position="174"/>
    </location>
</feature>
<name>NAGZ_ECOSM</name>
<comment type="function">
    <text evidence="1">Plays a role in peptidoglycan recycling by cleaving the terminal beta-1,4-linked N-acetylglucosamine (GlcNAc) from peptide-linked peptidoglycan fragments, giving rise to free GlcNAc, anhydro-N-acetylmuramic acid and anhydro-N-acetylmuramic acid-linked peptides.</text>
</comment>
<comment type="catalytic activity">
    <reaction evidence="1">
        <text>Hydrolysis of terminal non-reducing N-acetyl-D-hexosamine residues in N-acetyl-beta-D-hexosaminides.</text>
        <dbReference type="EC" id="3.2.1.52"/>
    </reaction>
</comment>
<comment type="pathway">
    <text evidence="1">Cell wall biogenesis; peptidoglycan recycling.</text>
</comment>
<comment type="subcellular location">
    <subcellularLocation>
        <location evidence="1">Cytoplasm</location>
    </subcellularLocation>
</comment>
<comment type="similarity">
    <text evidence="1">Belongs to the glycosyl hydrolase 3 family. NagZ subfamily.</text>
</comment>
<keyword id="KW-0131">Cell cycle</keyword>
<keyword id="KW-0132">Cell division</keyword>
<keyword id="KW-0133">Cell shape</keyword>
<keyword id="KW-0961">Cell wall biogenesis/degradation</keyword>
<keyword id="KW-0963">Cytoplasm</keyword>
<keyword id="KW-0326">Glycosidase</keyword>
<keyword id="KW-0378">Hydrolase</keyword>
<keyword id="KW-0573">Peptidoglycan synthesis</keyword>
<evidence type="ECO:0000255" key="1">
    <source>
        <dbReference type="HAMAP-Rule" id="MF_00364"/>
    </source>
</evidence>
<dbReference type="EC" id="3.2.1.52" evidence="1"/>
<dbReference type="EMBL" id="CP000970">
    <property type="protein sequence ID" value="ACB19558.1"/>
    <property type="molecule type" value="Genomic_DNA"/>
</dbReference>
<dbReference type="RefSeq" id="WP_000529284.1">
    <property type="nucleotide sequence ID" value="NC_010498.1"/>
</dbReference>
<dbReference type="SMR" id="B1LI37"/>
<dbReference type="CAZy" id="GH3">
    <property type="family name" value="Glycoside Hydrolase Family 3"/>
</dbReference>
<dbReference type="KEGG" id="ecm:EcSMS35_2019"/>
<dbReference type="HOGENOM" id="CLU_008392_0_0_6"/>
<dbReference type="UniPathway" id="UPA00544"/>
<dbReference type="Proteomes" id="UP000007011">
    <property type="component" value="Chromosome"/>
</dbReference>
<dbReference type="GO" id="GO:0005737">
    <property type="term" value="C:cytoplasm"/>
    <property type="evidence" value="ECO:0007669"/>
    <property type="project" value="UniProtKB-SubCell"/>
</dbReference>
<dbReference type="GO" id="GO:0004563">
    <property type="term" value="F:beta-N-acetylhexosaminidase activity"/>
    <property type="evidence" value="ECO:0007669"/>
    <property type="project" value="UniProtKB-UniRule"/>
</dbReference>
<dbReference type="GO" id="GO:0005975">
    <property type="term" value="P:carbohydrate metabolic process"/>
    <property type="evidence" value="ECO:0007669"/>
    <property type="project" value="InterPro"/>
</dbReference>
<dbReference type="GO" id="GO:0051301">
    <property type="term" value="P:cell division"/>
    <property type="evidence" value="ECO:0007669"/>
    <property type="project" value="UniProtKB-KW"/>
</dbReference>
<dbReference type="GO" id="GO:0071555">
    <property type="term" value="P:cell wall organization"/>
    <property type="evidence" value="ECO:0007669"/>
    <property type="project" value="UniProtKB-KW"/>
</dbReference>
<dbReference type="GO" id="GO:0009252">
    <property type="term" value="P:peptidoglycan biosynthetic process"/>
    <property type="evidence" value="ECO:0007669"/>
    <property type="project" value="UniProtKB-KW"/>
</dbReference>
<dbReference type="GO" id="GO:0009254">
    <property type="term" value="P:peptidoglycan turnover"/>
    <property type="evidence" value="ECO:0007669"/>
    <property type="project" value="UniProtKB-UniRule"/>
</dbReference>
<dbReference type="GO" id="GO:0008360">
    <property type="term" value="P:regulation of cell shape"/>
    <property type="evidence" value="ECO:0007669"/>
    <property type="project" value="UniProtKB-KW"/>
</dbReference>
<dbReference type="FunFam" id="3.20.20.300:FF:000001">
    <property type="entry name" value="Beta-hexosaminidase"/>
    <property type="match status" value="1"/>
</dbReference>
<dbReference type="Gene3D" id="3.20.20.300">
    <property type="entry name" value="Glycoside hydrolase, family 3, N-terminal domain"/>
    <property type="match status" value="1"/>
</dbReference>
<dbReference type="HAMAP" id="MF_00364">
    <property type="entry name" value="NagZ"/>
    <property type="match status" value="1"/>
</dbReference>
<dbReference type="InterPro" id="IPR022956">
    <property type="entry name" value="Beta_hexosaminidase_bac"/>
</dbReference>
<dbReference type="InterPro" id="IPR019800">
    <property type="entry name" value="Glyco_hydro_3_AS"/>
</dbReference>
<dbReference type="InterPro" id="IPR001764">
    <property type="entry name" value="Glyco_hydro_3_N"/>
</dbReference>
<dbReference type="InterPro" id="IPR036962">
    <property type="entry name" value="Glyco_hydro_3_N_sf"/>
</dbReference>
<dbReference type="InterPro" id="IPR017853">
    <property type="entry name" value="Glycoside_hydrolase_SF"/>
</dbReference>
<dbReference type="InterPro" id="IPR050226">
    <property type="entry name" value="NagZ_Beta-hexosaminidase"/>
</dbReference>
<dbReference type="NCBIfam" id="NF003740">
    <property type="entry name" value="PRK05337.1"/>
    <property type="match status" value="1"/>
</dbReference>
<dbReference type="PANTHER" id="PTHR30480:SF13">
    <property type="entry name" value="BETA-HEXOSAMINIDASE"/>
    <property type="match status" value="1"/>
</dbReference>
<dbReference type="PANTHER" id="PTHR30480">
    <property type="entry name" value="BETA-HEXOSAMINIDASE-RELATED"/>
    <property type="match status" value="1"/>
</dbReference>
<dbReference type="Pfam" id="PF00933">
    <property type="entry name" value="Glyco_hydro_3"/>
    <property type="match status" value="1"/>
</dbReference>
<dbReference type="SUPFAM" id="SSF51445">
    <property type="entry name" value="(Trans)glycosidases"/>
    <property type="match status" value="1"/>
</dbReference>
<dbReference type="PROSITE" id="PS00775">
    <property type="entry name" value="GLYCOSYL_HYDROL_F3"/>
    <property type="match status" value="1"/>
</dbReference>
<reference key="1">
    <citation type="journal article" date="2008" name="J. Bacteriol.">
        <title>Insights into the environmental resistance gene pool from the genome sequence of the multidrug-resistant environmental isolate Escherichia coli SMS-3-5.</title>
        <authorList>
            <person name="Fricke W.F."/>
            <person name="Wright M.S."/>
            <person name="Lindell A.H."/>
            <person name="Harkins D.M."/>
            <person name="Baker-Austin C."/>
            <person name="Ravel J."/>
            <person name="Stepanauskas R."/>
        </authorList>
    </citation>
    <scope>NUCLEOTIDE SEQUENCE [LARGE SCALE GENOMIC DNA]</scope>
    <source>
        <strain>SMS-3-5 / SECEC</strain>
    </source>
</reference>
<proteinExistence type="inferred from homology"/>
<gene>
    <name evidence="1" type="primary">nagZ</name>
    <name type="ordered locus">EcSMS35_2019</name>
</gene>
<organism>
    <name type="scientific">Escherichia coli (strain SMS-3-5 / SECEC)</name>
    <dbReference type="NCBI Taxonomy" id="439855"/>
    <lineage>
        <taxon>Bacteria</taxon>
        <taxon>Pseudomonadati</taxon>
        <taxon>Pseudomonadota</taxon>
        <taxon>Gammaproteobacteria</taxon>
        <taxon>Enterobacterales</taxon>
        <taxon>Enterobacteriaceae</taxon>
        <taxon>Escherichia</taxon>
    </lineage>
</organism>
<protein>
    <recommendedName>
        <fullName evidence="1">Beta-hexosaminidase</fullName>
        <ecNumber evidence="1">3.2.1.52</ecNumber>
    </recommendedName>
    <alternativeName>
        <fullName evidence="1">Beta-N-acetylhexosaminidase</fullName>
    </alternativeName>
    <alternativeName>
        <fullName evidence="1">N-acetyl-beta-glucosaminidase</fullName>
    </alternativeName>
</protein>
<accession>B1LI37</accession>